<comment type="function">
    <text>Chemotactic factor that attracts monocytes and eosinophils, but not neutrophils. Augments monocyte anti-tumor activity. Also induces the release of gelatinase B. This protein can bind heparin. Binds to CCR1, CCR2 and CCR3.</text>
</comment>
<comment type="subunit">
    <text evidence="3 4">Monomer. Interacts with TNFAIP6 (via Link domain).</text>
</comment>
<comment type="interaction">
    <interactant intactId="EBI-718759">
        <id>P80098</id>
    </interactant>
    <interactant intactId="EBI-741480">
        <id>Q9UMX0</id>
        <label>UBQLN1</label>
    </interactant>
    <organismsDiffer>false</organismsDiffer>
    <experiments>3</experiments>
</comment>
<comment type="interaction">
    <interactant intactId="EBI-718759">
        <id>P80098</id>
    </interactant>
    <interactant intactId="EBI-10173939">
        <id>Q9UMX0-2</id>
        <label>UBQLN1</label>
    </interactant>
    <organismsDiffer>false</organismsDiffer>
    <experiments>3</experiments>
</comment>
<comment type="interaction">
    <interactant intactId="EBI-718759">
        <id>P80098</id>
    </interactant>
    <interactant intactId="EBI-947187">
        <id>Q9UHD9</id>
        <label>UBQLN2</label>
    </interactant>
    <organismsDiffer>false</organismsDiffer>
    <experiments>3</experiments>
</comment>
<comment type="interaction">
    <interactant intactId="EBI-718759">
        <id>P80098</id>
    </interactant>
    <interactant intactId="EBI-16161937">
        <id>Q2F862</id>
    </interactant>
    <organismsDiffer>true</organismsDiffer>
    <experiments>3</experiments>
</comment>
<comment type="interaction">
    <interactant intactId="EBI-11711410">
        <id>PRO_0000005183</id>
    </interactant>
    <interactant intactId="EBI-11700693">
        <id>P98066</id>
        <label>TNFAIP6</label>
    </interactant>
    <organismsDiffer>false</organismsDiffer>
    <experiments>2</experiments>
</comment>
<comment type="subcellular location">
    <subcellularLocation>
        <location>Secreted</location>
    </subcellularLocation>
</comment>
<comment type="PTM">
    <text>O-glycosylated.</text>
</comment>
<comment type="similarity">
    <text evidence="5">Belongs to the intercrine beta (chemokine CC) family.</text>
</comment>
<comment type="sequence caution" evidence="5">
    <conflict type="erroneous initiation">
        <sequence resource="EMBL-CDS" id="CAA50405"/>
    </conflict>
</comment>
<comment type="sequence caution" evidence="5">
    <conflict type="erroneous initiation">
        <sequence resource="EMBL-CDS" id="CAA50406"/>
    </conflict>
</comment>
<comment type="sequence caution" evidence="5">
    <conflict type="erroneous initiation">
        <sequence resource="EMBL-CDS" id="CAA51055"/>
    </conflict>
</comment>
<comment type="online information" name="Wikipedia">
    <link uri="https://en.wikipedia.org/wiki/CCL7"/>
    <text>CCL7 entry</text>
</comment>
<proteinExistence type="evidence at protein level"/>
<evidence type="ECO:0000255" key="1"/>
<evidence type="ECO:0000269" key="2">
    <source>
    </source>
</evidence>
<evidence type="ECO:0000269" key="3">
    <source>
    </source>
</evidence>
<evidence type="ECO:0000269" key="4">
    <source>
    </source>
</evidence>
<evidence type="ECO:0000305" key="5"/>
<evidence type="ECO:0007829" key="6">
    <source>
        <dbReference type="PDB" id="1NCV"/>
    </source>
</evidence>
<evidence type="ECO:0007829" key="7">
    <source>
        <dbReference type="PDB" id="7S58"/>
    </source>
</evidence>
<evidence type="ECO:0007829" key="8">
    <source>
        <dbReference type="PDB" id="7SCU"/>
    </source>
</evidence>
<evidence type="ECO:0007829" key="9">
    <source>
        <dbReference type="PDB" id="8FK6"/>
    </source>
</evidence>
<reference key="1">
    <citation type="journal article" date="1993" name="Biochem. Biophys. Res. Commun.">
        <title>Human monocyte chemotactic protein-3 (MCP-3): molecular cloning of the cDNA and comparison with other chemokines.</title>
        <authorList>
            <person name="Opdenakker G."/>
            <person name="Froyen G."/>
            <person name="Fiten P."/>
            <person name="Proost P."/>
            <person name="van Damme J."/>
        </authorList>
    </citation>
    <scope>NUCLEOTIDE SEQUENCE [MRNA]</scope>
    <scope>PROTEIN SEQUENCE OF 31-67 AND 71-99</scope>
</reference>
<reference key="2">
    <citation type="journal article" date="1994" name="Genomics">
        <title>The human MCP-3 gene (SCYA7): cloning, sequence analysis, and assignment to the C-C chemokine gene cluster on chromosome 17q11.2-q12.</title>
        <authorList>
            <person name="Opdenakker G."/>
            <person name="Fiten P."/>
            <person name="Nys G."/>
            <person name="Froyen G."/>
            <person name="van Roy N."/>
            <person name="Speleman F."/>
            <person name="Laureys G."/>
            <person name="van Damme J."/>
        </authorList>
    </citation>
    <scope>NUCLEOTIDE SEQUENCE [GENOMIC DNA / MRNA]</scope>
</reference>
<reference key="3">
    <citation type="journal article" date="1993" name="Eur. Cytokine Netw.">
        <title>Molecular cloning of the MCP-3 chemokine gene and regulation of its expression.</title>
        <authorList>
            <person name="Minty A."/>
            <person name="Chalon P."/>
            <person name="Guillemot J.-C."/>
            <person name="Kaghad M."/>
            <person name="Liauzun P."/>
            <person name="Magazin M."/>
            <person name="Miloux B."/>
            <person name="Minty C."/>
            <person name="Ramond P."/>
            <person name="Vita N."/>
            <person name="Lupker J."/>
            <person name="Shire D."/>
            <person name="Ferrara P."/>
            <person name="Caput D."/>
        </authorList>
    </citation>
    <scope>NUCLEOTIDE SEQUENCE [MRNA]</scope>
</reference>
<reference key="4">
    <citation type="journal article" date="2004" name="Genome Res.">
        <title>The status, quality, and expansion of the NIH full-length cDNA project: the Mammalian Gene Collection (MGC).</title>
        <authorList>
            <consortium name="The MGC Project Team"/>
        </authorList>
    </citation>
    <scope>NUCLEOTIDE SEQUENCE [LARGE SCALE MRNA]</scope>
    <source>
        <tissue>Blood</tissue>
        <tissue>Colon</tissue>
    </source>
</reference>
<reference key="5">
    <citation type="submission" date="1998-01" db="EMBL/GenBank/DDBJ databases">
        <authorList>
            <person name="Jang J.S."/>
            <person name="Kim B.E."/>
        </authorList>
    </citation>
    <scope>NUCLEOTIDE SEQUENCE [MRNA] OF 24-99</scope>
</reference>
<reference key="6">
    <citation type="journal article" date="1992" name="J. Exp. Med.">
        <title>Structural and functional identification of two human, tumor-derived monocyte chemotactic proteins (MCP-2 and MCP-3) belonging to the chemokine family.</title>
        <authorList>
            <person name="van Damme J."/>
            <person name="Proost P."/>
            <person name="Lenaerts J.-P."/>
            <person name="Opdenakker G."/>
        </authorList>
    </citation>
    <scope>PROTEIN SEQUENCE OF 30-99</scope>
    <source>
        <tissue>Osteosarcoma</tissue>
    </source>
</reference>
<reference key="7">
    <citation type="journal article" date="2004" name="Protein Sci.">
        <title>Signal peptide prediction based on analysis of experimentally verified cleavage sites.</title>
        <authorList>
            <person name="Zhang Z."/>
            <person name="Henzel W.J."/>
        </authorList>
    </citation>
    <scope>PROTEIN SEQUENCE OF 24-38</scope>
    <scope>PYROGLUTAMATE FORMATION AT GLN-24</scope>
</reference>
<reference key="8">
    <citation type="journal article" date="2016" name="J. Biol. Chem.">
        <title>The Anti-inflammatory Protein TSG-6 Regulates Chemokine Function by Inhibiting Chemokine/Glycosaminoglycan Interactions.</title>
        <authorList>
            <person name="Dyer D.P."/>
            <person name="Salanga C.L."/>
            <person name="Johns S.C."/>
            <person name="Valdambrini E."/>
            <person name="Fuster M.M."/>
            <person name="Milner C.M."/>
            <person name="Day A.J."/>
            <person name="Handel T.M."/>
        </authorList>
    </citation>
    <scope>INTERACTION WITH TNFAIP6</scope>
    <scope>MUTAGENESIS OF LYS-41; LYS-42 AND LYS-45</scope>
</reference>
<reference key="9">
    <citation type="journal article" date="1996" name="FEBS Lett.">
        <title>Structural characterization of a monomeric chemokine: monocyte chemoattractant protein-3.</title>
        <authorList>
            <person name="Kim K.-S."/>
            <person name="Rajarathnam K."/>
            <person name="Clark-Lewis I."/>
            <person name="Sykes B.D."/>
        </authorList>
    </citation>
    <scope>STRUCTURE BY NMR</scope>
    <scope>SUBUNIT</scope>
</reference>
<reference key="10">
    <citation type="journal article" date="1997" name="Biochemistry">
        <title>Determination of the three-dimensional structure of CC chemokine monocyte chemoattractant protein 3 by 1H two-dimensional NMR spectroscopy.</title>
        <authorList>
            <person name="Meunier S."/>
            <person name="Bernassau J.-M."/>
            <person name="Guillemot J.-C."/>
            <person name="Ferrara P."/>
            <person name="Darbon H."/>
        </authorList>
    </citation>
    <scope>STRUCTURE BY NMR</scope>
</reference>
<reference key="11">
    <citation type="submission" date="1998-08" db="PDB data bank">
        <authorList>
            <person name="Kwon D."/>
            <person name="Lee D."/>
            <person name="Sykes B.D."/>
            <person name="Kim K.-S."/>
        </authorList>
    </citation>
    <scope>STRUCTURE BY NMR</scope>
</reference>
<dbReference type="EMBL" id="X72308">
    <property type="protein sequence ID" value="CAA51055.1"/>
    <property type="status" value="ALT_INIT"/>
    <property type="molecule type" value="mRNA"/>
</dbReference>
<dbReference type="EMBL" id="X72309">
    <property type="status" value="NOT_ANNOTATED_CDS"/>
    <property type="molecule type" value="Genomic_DNA"/>
</dbReference>
<dbReference type="EMBL" id="X71087">
    <property type="protein sequence ID" value="CAA50407.1"/>
    <property type="molecule type" value="mRNA"/>
</dbReference>
<dbReference type="EMBL" id="X71087">
    <property type="protein sequence ID" value="CAA50406.1"/>
    <property type="status" value="ALT_INIT"/>
    <property type="molecule type" value="mRNA"/>
</dbReference>
<dbReference type="EMBL" id="X71087">
    <property type="protein sequence ID" value="CAA50405.1"/>
    <property type="status" value="ALT_INIT"/>
    <property type="molecule type" value="mRNA"/>
</dbReference>
<dbReference type="EMBL" id="BC092436">
    <property type="protein sequence ID" value="AAH92436.1"/>
    <property type="molecule type" value="mRNA"/>
</dbReference>
<dbReference type="EMBL" id="BC112258">
    <property type="protein sequence ID" value="AAI12259.1"/>
    <property type="molecule type" value="mRNA"/>
</dbReference>
<dbReference type="EMBL" id="BC112260">
    <property type="protein sequence ID" value="AAI12261.1"/>
    <property type="molecule type" value="mRNA"/>
</dbReference>
<dbReference type="EMBL" id="AF043338">
    <property type="protein sequence ID" value="AAC03538.1"/>
    <property type="molecule type" value="mRNA"/>
</dbReference>
<dbReference type="CCDS" id="CCDS11278.1"/>
<dbReference type="RefSeq" id="NP_006264.2">
    <property type="nucleotide sequence ID" value="NM_006273.3"/>
</dbReference>
<dbReference type="PDB" id="1BO0">
    <property type="method" value="NMR"/>
    <property type="chains" value="A=24-99"/>
</dbReference>
<dbReference type="PDB" id="1NCV">
    <property type="method" value="NMR"/>
    <property type="chains" value="A/B=24-99"/>
</dbReference>
<dbReference type="PDB" id="4ZKC">
    <property type="method" value="X-ray"/>
    <property type="resolution" value="3.15 A"/>
    <property type="chains" value="B=24-99"/>
</dbReference>
<dbReference type="PDB" id="7S58">
    <property type="method" value="X-ray"/>
    <property type="resolution" value="1.82 A"/>
    <property type="chains" value="E/F/H/J=24-99"/>
</dbReference>
<dbReference type="PDB" id="7S59">
    <property type="method" value="X-ray"/>
    <property type="resolution" value="2.39 A"/>
    <property type="chains" value="2/4=41-99"/>
</dbReference>
<dbReference type="PDB" id="7SCU">
    <property type="method" value="X-ray"/>
    <property type="resolution" value="1.86 A"/>
    <property type="chains" value="B=24-99"/>
</dbReference>
<dbReference type="PDB" id="8FJ3">
    <property type="method" value="X-ray"/>
    <property type="resolution" value="2.07 A"/>
    <property type="chains" value="B=24-99"/>
</dbReference>
<dbReference type="PDB" id="8FK6">
    <property type="method" value="X-ray"/>
    <property type="resolution" value="1.74 A"/>
    <property type="chains" value="B=24-99"/>
</dbReference>
<dbReference type="PDB" id="8FK8">
    <property type="method" value="X-ray"/>
    <property type="resolution" value="1.96 A"/>
    <property type="chains" value="B=24-99"/>
</dbReference>
<dbReference type="PDB" id="8JPS">
    <property type="method" value="EM"/>
    <property type="resolution" value="3.65 A"/>
    <property type="chains" value="C/D=31-93"/>
</dbReference>
<dbReference type="PDBsum" id="1BO0"/>
<dbReference type="PDBsum" id="1NCV"/>
<dbReference type="PDBsum" id="4ZKC"/>
<dbReference type="PDBsum" id="7S58"/>
<dbReference type="PDBsum" id="7S59"/>
<dbReference type="PDBsum" id="7SCU"/>
<dbReference type="PDBsum" id="8FJ3"/>
<dbReference type="PDBsum" id="8FK6"/>
<dbReference type="PDBsum" id="8FK8"/>
<dbReference type="PDBsum" id="8JPS"/>
<dbReference type="BMRB" id="P80098"/>
<dbReference type="EMDB" id="EMD-36488"/>
<dbReference type="SMR" id="P80098"/>
<dbReference type="BioGRID" id="112257">
    <property type="interactions" value="12"/>
</dbReference>
<dbReference type="DIP" id="DIP-5847N"/>
<dbReference type="FunCoup" id="P80098">
    <property type="interactions" value="657"/>
</dbReference>
<dbReference type="IntAct" id="P80098">
    <property type="interactions" value="8"/>
</dbReference>
<dbReference type="STRING" id="9606.ENSP00000367832"/>
<dbReference type="ChEMBL" id="CHEMBL3217391"/>
<dbReference type="GlyCosmos" id="P80098">
    <property type="glycosylation" value="1 site, No reported glycans"/>
</dbReference>
<dbReference type="GlyGen" id="P80098">
    <property type="glycosylation" value="1 site"/>
</dbReference>
<dbReference type="BioMuta" id="CCL7"/>
<dbReference type="DMDM" id="1170890"/>
<dbReference type="MassIVE" id="P80098"/>
<dbReference type="PaxDb" id="9606-ENSP00000367832"/>
<dbReference type="PeptideAtlas" id="P80098"/>
<dbReference type="ProteomicsDB" id="57665"/>
<dbReference type="Antibodypedia" id="15482">
    <property type="antibodies" value="726 antibodies from 35 providers"/>
</dbReference>
<dbReference type="DNASU" id="6354"/>
<dbReference type="Ensembl" id="ENST00000378569.2">
    <property type="protein sequence ID" value="ENSP00000367832.2"/>
    <property type="gene ID" value="ENSG00000108688.11"/>
</dbReference>
<dbReference type="GeneID" id="6354"/>
<dbReference type="KEGG" id="hsa:6354"/>
<dbReference type="MANE-Select" id="ENST00000378569.2">
    <property type="protein sequence ID" value="ENSP00000367832.2"/>
    <property type="RefSeq nucleotide sequence ID" value="NM_006273.4"/>
    <property type="RefSeq protein sequence ID" value="NP_006264.2"/>
</dbReference>
<dbReference type="UCSC" id="uc002hhz.5">
    <property type="organism name" value="human"/>
</dbReference>
<dbReference type="AGR" id="HGNC:10634"/>
<dbReference type="CTD" id="6354"/>
<dbReference type="DisGeNET" id="6354"/>
<dbReference type="GeneCards" id="CCL7"/>
<dbReference type="HGNC" id="HGNC:10634">
    <property type="gene designation" value="CCL7"/>
</dbReference>
<dbReference type="HPA" id="ENSG00000108688">
    <property type="expression patterns" value="Tissue enriched (bone)"/>
</dbReference>
<dbReference type="MIM" id="158106">
    <property type="type" value="gene"/>
</dbReference>
<dbReference type="neXtProt" id="NX_P80098"/>
<dbReference type="OpenTargets" id="ENSG00000108688"/>
<dbReference type="PharmGKB" id="PA35566"/>
<dbReference type="VEuPathDB" id="HostDB:ENSG00000108688"/>
<dbReference type="eggNOG" id="ENOG502S6ZP">
    <property type="taxonomic scope" value="Eukaryota"/>
</dbReference>
<dbReference type="GeneTree" id="ENSGT01130000278316"/>
<dbReference type="HOGENOM" id="CLU_141716_1_0_1"/>
<dbReference type="InParanoid" id="P80098"/>
<dbReference type="OMA" id="QKWVQEF"/>
<dbReference type="OrthoDB" id="8934837at2759"/>
<dbReference type="PAN-GO" id="P80098">
    <property type="GO annotations" value="15 GO annotations based on evolutionary models"/>
</dbReference>
<dbReference type="PhylomeDB" id="P80098"/>
<dbReference type="TreeFam" id="TF334888"/>
<dbReference type="PathwayCommons" id="P80098"/>
<dbReference type="Reactome" id="R-HSA-380108">
    <property type="pathway name" value="Chemokine receptors bind chemokines"/>
</dbReference>
<dbReference type="SignaLink" id="P80098"/>
<dbReference type="SIGNOR" id="P80098"/>
<dbReference type="BioGRID-ORCS" id="6354">
    <property type="hits" value="17 hits in 1135 CRISPR screens"/>
</dbReference>
<dbReference type="EvolutionaryTrace" id="P80098"/>
<dbReference type="GeneWiki" id="CCL7"/>
<dbReference type="GenomeRNAi" id="6354"/>
<dbReference type="Pharos" id="P80098">
    <property type="development level" value="Tbio"/>
</dbReference>
<dbReference type="PRO" id="PR:P80098"/>
<dbReference type="Proteomes" id="UP000005640">
    <property type="component" value="Chromosome 17"/>
</dbReference>
<dbReference type="RNAct" id="P80098">
    <property type="molecule type" value="protein"/>
</dbReference>
<dbReference type="Bgee" id="ENSG00000108688">
    <property type="expression patterns" value="Expressed in islet of Langerhans and 100 other cell types or tissues"/>
</dbReference>
<dbReference type="ExpressionAtlas" id="P80098">
    <property type="expression patterns" value="baseline and differential"/>
</dbReference>
<dbReference type="GO" id="GO:0005576">
    <property type="term" value="C:extracellular region"/>
    <property type="evidence" value="ECO:0000304"/>
    <property type="project" value="Reactome"/>
</dbReference>
<dbReference type="GO" id="GO:0005615">
    <property type="term" value="C:extracellular space"/>
    <property type="evidence" value="ECO:0000318"/>
    <property type="project" value="GO_Central"/>
</dbReference>
<dbReference type="GO" id="GO:0048020">
    <property type="term" value="F:CCR chemokine receptor binding"/>
    <property type="evidence" value="ECO:0000318"/>
    <property type="project" value="GO_Central"/>
</dbReference>
<dbReference type="GO" id="GO:0031726">
    <property type="term" value="F:CCR1 chemokine receptor binding"/>
    <property type="evidence" value="ECO:0000353"/>
    <property type="project" value="UniProtKB"/>
</dbReference>
<dbReference type="GO" id="GO:0031727">
    <property type="term" value="F:CCR2 chemokine receptor binding"/>
    <property type="evidence" value="ECO:0007669"/>
    <property type="project" value="Ensembl"/>
</dbReference>
<dbReference type="GO" id="GO:0008009">
    <property type="term" value="F:chemokine activity"/>
    <property type="evidence" value="ECO:0000314"/>
    <property type="project" value="UniProtKB"/>
</dbReference>
<dbReference type="GO" id="GO:0008201">
    <property type="term" value="F:heparin binding"/>
    <property type="evidence" value="ECO:0007669"/>
    <property type="project" value="UniProtKB-KW"/>
</dbReference>
<dbReference type="GO" id="GO:0061844">
    <property type="term" value="P:antimicrobial humoral immune response mediated by antimicrobial peptide"/>
    <property type="evidence" value="ECO:0000318"/>
    <property type="project" value="GO_Central"/>
</dbReference>
<dbReference type="GO" id="GO:0007267">
    <property type="term" value="P:cell-cell signaling"/>
    <property type="evidence" value="ECO:0000304"/>
    <property type="project" value="ProtInc"/>
</dbReference>
<dbReference type="GO" id="GO:0071361">
    <property type="term" value="P:cellular response to ethanol"/>
    <property type="evidence" value="ECO:0007669"/>
    <property type="project" value="Ensembl"/>
</dbReference>
<dbReference type="GO" id="GO:0070098">
    <property type="term" value="P:chemokine-mediated signaling pathway"/>
    <property type="evidence" value="ECO:0000318"/>
    <property type="project" value="GO_Central"/>
</dbReference>
<dbReference type="GO" id="GO:0006935">
    <property type="term" value="P:chemotaxis"/>
    <property type="evidence" value="ECO:0000304"/>
    <property type="project" value="ProtInc"/>
</dbReference>
<dbReference type="GO" id="GO:0007010">
    <property type="term" value="P:cytoskeleton organization"/>
    <property type="evidence" value="ECO:0000314"/>
    <property type="project" value="UniProtKB"/>
</dbReference>
<dbReference type="GO" id="GO:0048245">
    <property type="term" value="P:eosinophil chemotaxis"/>
    <property type="evidence" value="ECO:0000314"/>
    <property type="project" value="UniProtKB"/>
</dbReference>
<dbReference type="GO" id="GO:0006954">
    <property type="term" value="P:inflammatory response"/>
    <property type="evidence" value="ECO:0000318"/>
    <property type="project" value="GO_Central"/>
</dbReference>
<dbReference type="GO" id="GO:0006874">
    <property type="term" value="P:intracellular calcium ion homeostasis"/>
    <property type="evidence" value="ECO:0000304"/>
    <property type="project" value="ProtInc"/>
</dbReference>
<dbReference type="GO" id="GO:0002548">
    <property type="term" value="P:monocyte chemotaxis"/>
    <property type="evidence" value="ECO:0000305"/>
    <property type="project" value="UniProtKB"/>
</dbReference>
<dbReference type="GO" id="GO:0030335">
    <property type="term" value="P:positive regulation of cell migration"/>
    <property type="evidence" value="ECO:0000314"/>
    <property type="project" value="UniProtKB"/>
</dbReference>
<dbReference type="GO" id="GO:2000503">
    <property type="term" value="P:positive regulation of natural killer cell chemotaxis"/>
    <property type="evidence" value="ECO:0000314"/>
    <property type="project" value="UniProtKB"/>
</dbReference>
<dbReference type="GO" id="GO:0008360">
    <property type="term" value="P:regulation of cell shape"/>
    <property type="evidence" value="ECO:0000314"/>
    <property type="project" value="UniProtKB"/>
</dbReference>
<dbReference type="GO" id="GO:0010332">
    <property type="term" value="P:response to gamma radiation"/>
    <property type="evidence" value="ECO:0007669"/>
    <property type="project" value="Ensembl"/>
</dbReference>
<dbReference type="GO" id="GO:0007165">
    <property type="term" value="P:signal transduction"/>
    <property type="evidence" value="ECO:0000304"/>
    <property type="project" value="ProtInc"/>
</dbReference>
<dbReference type="CDD" id="cd00272">
    <property type="entry name" value="Chemokine_CC"/>
    <property type="match status" value="1"/>
</dbReference>
<dbReference type="FunFam" id="2.40.50.40:FF:000002">
    <property type="entry name" value="C-C motif chemokine"/>
    <property type="match status" value="1"/>
</dbReference>
<dbReference type="Gene3D" id="2.40.50.40">
    <property type="match status" value="1"/>
</dbReference>
<dbReference type="InterPro" id="IPR039809">
    <property type="entry name" value="Chemokine_b/g/d"/>
</dbReference>
<dbReference type="InterPro" id="IPR000827">
    <property type="entry name" value="Chemokine_CC_CS"/>
</dbReference>
<dbReference type="InterPro" id="IPR001811">
    <property type="entry name" value="Chemokine_IL8-like_dom"/>
</dbReference>
<dbReference type="InterPro" id="IPR036048">
    <property type="entry name" value="Interleukin_8-like_sf"/>
</dbReference>
<dbReference type="PANTHER" id="PTHR12015:SF161">
    <property type="entry name" value="C-C MOTIF CHEMOKINE 7"/>
    <property type="match status" value="1"/>
</dbReference>
<dbReference type="PANTHER" id="PTHR12015">
    <property type="entry name" value="SMALL INDUCIBLE CYTOKINE A"/>
    <property type="match status" value="1"/>
</dbReference>
<dbReference type="Pfam" id="PF00048">
    <property type="entry name" value="IL8"/>
    <property type="match status" value="1"/>
</dbReference>
<dbReference type="SMART" id="SM00199">
    <property type="entry name" value="SCY"/>
    <property type="match status" value="1"/>
</dbReference>
<dbReference type="SUPFAM" id="SSF54117">
    <property type="entry name" value="Interleukin 8-like chemokines"/>
    <property type="match status" value="1"/>
</dbReference>
<dbReference type="PROSITE" id="PS00472">
    <property type="entry name" value="SMALL_CYTOKINES_CC"/>
    <property type="match status" value="1"/>
</dbReference>
<name>CCL7_HUMAN</name>
<keyword id="KW-0002">3D-structure</keyword>
<keyword id="KW-0145">Chemotaxis</keyword>
<keyword id="KW-0202">Cytokine</keyword>
<keyword id="KW-0903">Direct protein sequencing</keyword>
<keyword id="KW-1015">Disulfide bond</keyword>
<keyword id="KW-0325">Glycoprotein</keyword>
<keyword id="KW-0358">Heparin-binding</keyword>
<keyword id="KW-0395">Inflammatory response</keyword>
<keyword id="KW-1267">Proteomics identification</keyword>
<keyword id="KW-0873">Pyrrolidone carboxylic acid</keyword>
<keyword id="KW-1185">Reference proteome</keyword>
<keyword id="KW-0964">Secreted</keyword>
<keyword id="KW-0732">Signal</keyword>
<organism>
    <name type="scientific">Homo sapiens</name>
    <name type="common">Human</name>
    <dbReference type="NCBI Taxonomy" id="9606"/>
    <lineage>
        <taxon>Eukaryota</taxon>
        <taxon>Metazoa</taxon>
        <taxon>Chordata</taxon>
        <taxon>Craniata</taxon>
        <taxon>Vertebrata</taxon>
        <taxon>Euteleostomi</taxon>
        <taxon>Mammalia</taxon>
        <taxon>Eutheria</taxon>
        <taxon>Euarchontoglires</taxon>
        <taxon>Primates</taxon>
        <taxon>Haplorrhini</taxon>
        <taxon>Catarrhini</taxon>
        <taxon>Hominidae</taxon>
        <taxon>Homo</taxon>
    </lineage>
</organism>
<accession>P80098</accession>
<accession>Q569J6</accession>
<feature type="signal peptide" evidence="2">
    <location>
        <begin position="1"/>
        <end position="23"/>
    </location>
</feature>
<feature type="chain" id="PRO_0000005183" description="C-C motif chemokine 7">
    <location>
        <begin position="24"/>
        <end position="99"/>
    </location>
</feature>
<feature type="modified residue" description="Pyrrolidone carboxylic acid" evidence="2">
    <location>
        <position position="24"/>
    </location>
</feature>
<feature type="glycosylation site" description="N-linked (GlcNAc...) asparagine" evidence="1">
    <location>
        <position position="29"/>
    </location>
</feature>
<feature type="disulfide bond">
    <location>
        <begin position="34"/>
        <end position="59"/>
    </location>
</feature>
<feature type="disulfide bond">
    <location>
        <begin position="35"/>
        <end position="75"/>
    </location>
</feature>
<feature type="mutagenesis site" description="Decreases binding to Link domain of TNFAIP6; when associated with A-42 and A-45." evidence="3">
    <original>K</original>
    <variation>A</variation>
    <location>
        <position position="41"/>
    </location>
</feature>
<feature type="mutagenesis site" description="Decreases binding to Link domain of TNFAIP6; when associated with A-41 and A-45." evidence="3">
    <original>K</original>
    <variation>A</variation>
    <location>
        <position position="42"/>
    </location>
</feature>
<feature type="mutagenesis site" description="Decreases binding to Link domain of TNFAIP6; when associated with A-41 and A-42." evidence="3">
    <original>K</original>
    <variation>A</variation>
    <location>
        <position position="45"/>
    </location>
</feature>
<feature type="sequence conflict" description="In Ref. 6; AA sequence." evidence="5" ref="6">
    <original>T</original>
    <variation>K</variation>
    <location>
        <position position="30"/>
    </location>
</feature>
<feature type="sequence conflict" description="In Ref. 6; AA sequence." evidence="5" ref="6">
    <location>
        <begin position="68"/>
        <end position="70"/>
    </location>
</feature>
<feature type="strand" evidence="6">
    <location>
        <begin position="29"/>
        <end position="31"/>
    </location>
</feature>
<feature type="strand" evidence="8">
    <location>
        <begin position="33"/>
        <end position="37"/>
    </location>
</feature>
<feature type="helix" evidence="9">
    <location>
        <begin position="45"/>
        <end position="47"/>
    </location>
</feature>
<feature type="strand" evidence="9">
    <location>
        <begin position="48"/>
        <end position="54"/>
    </location>
</feature>
<feature type="helix" evidence="7">
    <location>
        <begin position="55"/>
        <end position="57"/>
    </location>
</feature>
<feature type="strand" evidence="9">
    <location>
        <begin position="59"/>
        <end position="61"/>
    </location>
</feature>
<feature type="strand" evidence="9">
    <location>
        <begin position="64"/>
        <end position="68"/>
    </location>
</feature>
<feature type="strand" evidence="9">
    <location>
        <begin position="73"/>
        <end position="76"/>
    </location>
</feature>
<feature type="helix" evidence="9">
    <location>
        <begin position="81"/>
        <end position="91"/>
    </location>
</feature>
<sequence>MKASAALLCLLLTAAAFSPQGLAQPVGINTSTTCCYRFINKKIPKQRLESYRRTTSSHCPREAVIFKTKLDKEICADPTQKWVQDFMKHLDKKTQTPKL</sequence>
<gene>
    <name type="primary">CCL7</name>
    <name type="synonym">MCP3</name>
    <name type="synonym">SCYA6</name>
    <name type="synonym">SCYA7</name>
</gene>
<protein>
    <recommendedName>
        <fullName>C-C motif chemokine 7</fullName>
    </recommendedName>
    <alternativeName>
        <fullName>Monocyte chemoattractant protein 3</fullName>
    </alternativeName>
    <alternativeName>
        <fullName>Monocyte chemotactic protein 3</fullName>
        <shortName>MCP-3</shortName>
    </alternativeName>
    <alternativeName>
        <fullName>NC28</fullName>
    </alternativeName>
    <alternativeName>
        <fullName>Small-inducible cytokine A7</fullName>
    </alternativeName>
</protein>